<name>GRP_BOVIN</name>
<evidence type="ECO:0000250" key="1">
    <source>
        <dbReference type="UniProtKB" id="P08989"/>
    </source>
</evidence>
<evidence type="ECO:0000250" key="2">
    <source>
        <dbReference type="UniProtKB" id="P24393"/>
    </source>
</evidence>
<evidence type="ECO:0000250" key="3">
    <source>
        <dbReference type="UniProtKB" id="P63153"/>
    </source>
</evidence>
<evidence type="ECO:0000250" key="4">
    <source>
        <dbReference type="UniProtKB" id="Q8R1I2"/>
    </source>
</evidence>
<evidence type="ECO:0000256" key="5">
    <source>
        <dbReference type="SAM" id="MobiDB-lite"/>
    </source>
</evidence>
<evidence type="ECO:0000269" key="6">
    <source>
    </source>
</evidence>
<evidence type="ECO:0000305" key="7"/>
<evidence type="ECO:0000305" key="8">
    <source>
    </source>
</evidence>
<gene>
    <name type="primary">GRP</name>
</gene>
<organism>
    <name type="scientific">Bos taurus</name>
    <name type="common">Bovine</name>
    <dbReference type="NCBI Taxonomy" id="9913"/>
    <lineage>
        <taxon>Eukaryota</taxon>
        <taxon>Metazoa</taxon>
        <taxon>Chordata</taxon>
        <taxon>Craniata</taxon>
        <taxon>Vertebrata</taxon>
        <taxon>Euteleostomi</taxon>
        <taxon>Mammalia</taxon>
        <taxon>Eutheria</taxon>
        <taxon>Laurasiatheria</taxon>
        <taxon>Artiodactyla</taxon>
        <taxon>Ruminantia</taxon>
        <taxon>Pecora</taxon>
        <taxon>Bovidae</taxon>
        <taxon>Bovinae</taxon>
        <taxon>Bos</taxon>
    </lineage>
</organism>
<comment type="function">
    <text evidence="2 3 4">Stimulates the release of gastrin and other gastrointestinal hormones (By similarity). Contributes to the perception of prurient stimuli and to the transmission of itch signals in the spinal cord that promote scratching behavior (By similarity). Contributes primarily to nonhistaminergic itch sensation (By similarity). In one study, shown to act in the amygdala as part of an inhibitory network which inhibits memory specifically related to learned fear (By similarity). In another study, shown to act on vasoactive intestinal peptide (VIP)-expressing cells in the auditory cortex, most likely via extrasynaptic diffusion from local and long-range sources, to mediate disinhibition of glutamatergic cells via VIP cell-specific GRPR signaling which leads to enhanced auditory fear memories (By similarity). Contributes to the regulation of food intake (By similarity). Inhibits voltage-gated sodium channels but enhances voltage-gated potassium channels in hippocampal neurons (By similarity). Induces sighing by acting directly on the pre-Botzinger complex, a cluster of several thousand neurons in the ventrolateral medulla responsible for inspiration during respiratory activity (By similarity).</text>
</comment>
<comment type="function">
    <molecule>Neuromedin-C</molecule>
    <text evidence="4">Induces an itch response through activation of receptors present on mast cells, triggering mast cell degranulation.</text>
</comment>
<comment type="subcellular location">
    <subcellularLocation>
        <location evidence="6">Cytoplasmic vesicle</location>
        <location evidence="6">Secretory vesicle lumen</location>
    </subcellularLocation>
    <subcellularLocation>
        <location evidence="8">Secreted</location>
    </subcellularLocation>
    <subcellularLocation>
        <location evidence="4">Cell projection</location>
        <location evidence="4">Neuron projection</location>
    </subcellularLocation>
    <text evidence="4">In neurons of the retrotrapezoid nucleus/parafacial respiratory group, expressed on neuron projections which project into the pre-Botzinger complex.</text>
</comment>
<comment type="tissue specificity">
    <text evidence="6">Detected in adrenal medulla (at protein level).</text>
</comment>
<comment type="similarity">
    <text evidence="7">Belongs to the bombesin/neuromedin-B/ranatensin family.</text>
</comment>
<comment type="sequence caution" evidence="7">
    <conflict type="frameshift">
        <sequence resource="EMBL-CDS" id="AAP13050"/>
    </conflict>
</comment>
<protein>
    <recommendedName>
        <fullName>Gastrin-releasing peptide</fullName>
        <shortName>GRP</shortName>
    </recommendedName>
    <component>
        <recommendedName>
            <fullName>Neuromedin-C</fullName>
        </recommendedName>
        <alternativeName>
            <fullName>GRP-(18-27)</fullName>
        </alternativeName>
        <alternativeName>
            <fullName>GRP-10</fullName>
        </alternativeName>
        <alternativeName>
            <fullName evidence="4">GRP18-27</fullName>
        </alternativeName>
    </component>
</protein>
<feature type="signal peptide" evidence="1">
    <location>
        <begin position="1"/>
        <end position="23"/>
    </location>
</feature>
<feature type="peptide" id="PRO_0000003030" description="Gastrin-releasing peptide" evidence="1">
    <location>
        <begin position="24"/>
        <end position="50"/>
    </location>
</feature>
<feature type="peptide" id="PRO_0000003031" description="Neuromedin-C" evidence="6">
    <location>
        <begin position="41"/>
        <end position="50"/>
    </location>
</feature>
<feature type="propeptide" id="PRO_0000003032" evidence="6">
    <location>
        <begin position="54"/>
        <end position="134"/>
    </location>
</feature>
<feature type="region of interest" description="Disordered" evidence="5">
    <location>
        <begin position="95"/>
        <end position="134"/>
    </location>
</feature>
<feature type="compositionally biased region" description="Basic and acidic residues" evidence="5">
    <location>
        <begin position="123"/>
        <end position="134"/>
    </location>
</feature>
<feature type="modified residue" description="Methionine amide" evidence="6">
    <location>
        <position position="50"/>
    </location>
</feature>
<feature type="sequence conflict" description="In Ref. 2; AAP13050." evidence="7" ref="2">
    <original>L</original>
    <variation>P</variation>
    <location>
        <position position="17"/>
    </location>
</feature>
<feature type="sequence conflict" description="In Ref. 2; AAP13050." evidence="7" ref="2">
    <original>WA</original>
    <variation>SG</variation>
    <location>
        <begin position="22"/>
        <end position="23"/>
    </location>
</feature>
<feature type="sequence conflict" description="In Ref. 2; AAP13050." evidence="7" ref="2">
    <original>G</original>
    <variation>A</variation>
    <location>
        <position position="31"/>
    </location>
</feature>
<feature type="sequence conflict" description="In Ref. 2; AAP13050." evidence="7" ref="2">
    <original>E</original>
    <variation>ES</variation>
    <location>
        <position position="64"/>
    </location>
</feature>
<feature type="sequence conflict" description="In Ref. 2; AAP13050." evidence="7" ref="2">
    <original>ARGHQM</original>
    <variation>PEPTRL</variation>
    <location>
        <begin position="93"/>
        <end position="98"/>
    </location>
</feature>
<feature type="sequence conflict" description="In Ref. 2; AAP13050." evidence="7" ref="2">
    <original>PQHEGR</original>
    <variation>SQREGG</variation>
    <location>
        <begin position="124"/>
        <end position="129"/>
    </location>
</feature>
<feature type="sequence conflict" description="In Ref. 2; AAP13050." evidence="7" ref="2">
    <original>N</original>
    <variation>Y</variation>
    <location>
        <position position="134"/>
    </location>
</feature>
<keyword id="KW-0027">Amidation</keyword>
<keyword id="KW-0966">Cell projection</keyword>
<keyword id="KW-0165">Cleavage on pair of basic residues</keyword>
<keyword id="KW-0968">Cytoplasmic vesicle</keyword>
<keyword id="KW-0903">Direct protein sequencing</keyword>
<keyword id="KW-0467">Mast cell degranulation</keyword>
<keyword id="KW-1185">Reference proteome</keyword>
<keyword id="KW-0964">Secreted</keyword>
<keyword id="KW-0732">Signal</keyword>
<proteinExistence type="evidence at protein level"/>
<accession>Q863C3</accession>
<accession>A6QQP2</accession>
<accession>Q7M2Y8</accession>
<sequence length="134" mass="14934">MRGREVPLVLLALVLCLAPRGWAAPVTAGRGGALAKMYTRGNHWAVGHLMGKKSVAESPQLHEEESLKEQLREYAQWEEATRNLLSLLQAKGARGHQMPPWEPLSIHQPAWDSEDVSNFKDTGPQHEGRNPQLN</sequence>
<dbReference type="EMBL" id="BC149933">
    <property type="protein sequence ID" value="AAI49934.1"/>
    <property type="molecule type" value="mRNA"/>
</dbReference>
<dbReference type="EMBL" id="AY255852">
    <property type="protein sequence ID" value="AAP13050.1"/>
    <property type="status" value="ALT_FRAME"/>
    <property type="molecule type" value="mRNA"/>
</dbReference>
<dbReference type="PIR" id="A60647">
    <property type="entry name" value="A60647"/>
</dbReference>
<dbReference type="RefSeq" id="NP_001094709.1">
    <property type="nucleotide sequence ID" value="NM_001101239.1"/>
</dbReference>
<dbReference type="FunCoup" id="Q863C3">
    <property type="interactions" value="48"/>
</dbReference>
<dbReference type="STRING" id="9913.ENSBTAP00000070870"/>
<dbReference type="PaxDb" id="9913-ENSBTAP00000006297"/>
<dbReference type="Ensembl" id="ENSBTAT00000006297.6">
    <property type="protein sequence ID" value="ENSBTAP00000006297.4"/>
    <property type="gene ID" value="ENSBTAG00000004796.6"/>
</dbReference>
<dbReference type="GeneID" id="615323"/>
<dbReference type="KEGG" id="bta:615323"/>
<dbReference type="CTD" id="2922"/>
<dbReference type="VEuPathDB" id="HostDB:ENSBTAG00000004796"/>
<dbReference type="VGNC" id="VGNC:29664">
    <property type="gene designation" value="GRP"/>
</dbReference>
<dbReference type="eggNOG" id="ENOG502S4DG">
    <property type="taxonomic scope" value="Eukaryota"/>
</dbReference>
<dbReference type="GeneTree" id="ENSGT00940000154470"/>
<dbReference type="HOGENOM" id="CLU_144892_0_0_1"/>
<dbReference type="InParanoid" id="Q863C3"/>
<dbReference type="OrthoDB" id="9879745at2759"/>
<dbReference type="TreeFam" id="TF336391"/>
<dbReference type="Reactome" id="R-BTA-375276">
    <property type="pathway name" value="Peptide ligand-binding receptors"/>
</dbReference>
<dbReference type="Reactome" id="R-BTA-381771">
    <property type="pathway name" value="Synthesis, secretion, and inactivation of Glucagon-like Peptide-1 (GLP-1)"/>
</dbReference>
<dbReference type="Reactome" id="R-BTA-416476">
    <property type="pathway name" value="G alpha (q) signalling events"/>
</dbReference>
<dbReference type="Proteomes" id="UP000009136">
    <property type="component" value="Chromosome 24"/>
</dbReference>
<dbReference type="Bgee" id="ENSBTAG00000004796">
    <property type="expression patterns" value="Expressed in oviduct epithelium and 86 other cell types or tissues"/>
</dbReference>
<dbReference type="GO" id="GO:0005615">
    <property type="term" value="C:extracellular space"/>
    <property type="evidence" value="ECO:0000250"/>
    <property type="project" value="UniProtKB"/>
</dbReference>
<dbReference type="GO" id="GO:0043005">
    <property type="term" value="C:neuron projection"/>
    <property type="evidence" value="ECO:0000250"/>
    <property type="project" value="UniProtKB"/>
</dbReference>
<dbReference type="GO" id="GO:0034774">
    <property type="term" value="C:secretory granule lumen"/>
    <property type="evidence" value="ECO:0000314"/>
    <property type="project" value="UniProtKB"/>
</dbReference>
<dbReference type="GO" id="GO:0005184">
    <property type="term" value="F:neuropeptide hormone activity"/>
    <property type="evidence" value="ECO:0000318"/>
    <property type="project" value="GO_Central"/>
</dbReference>
<dbReference type="GO" id="GO:0048565">
    <property type="term" value="P:digestive tract development"/>
    <property type="evidence" value="ECO:0000303"/>
    <property type="project" value="AgBase"/>
</dbReference>
<dbReference type="GO" id="GO:0043303">
    <property type="term" value="P:mast cell degranulation"/>
    <property type="evidence" value="ECO:0000250"/>
    <property type="project" value="UniProtKB"/>
</dbReference>
<dbReference type="GO" id="GO:1903817">
    <property type="term" value="P:negative regulation of voltage-gated potassium channel activity"/>
    <property type="evidence" value="ECO:0000250"/>
    <property type="project" value="UniProtKB"/>
</dbReference>
<dbReference type="GO" id="GO:1905151">
    <property type="term" value="P:negative regulation of voltage-gated sodium channel activity"/>
    <property type="evidence" value="ECO:0000250"/>
    <property type="project" value="UniProtKB"/>
</dbReference>
<dbReference type="GO" id="GO:0007218">
    <property type="term" value="P:neuropeptide signaling pathway"/>
    <property type="evidence" value="ECO:0000318"/>
    <property type="project" value="GO_Central"/>
</dbReference>
<dbReference type="GO" id="GO:2000987">
    <property type="term" value="P:positive regulation of behavioral fear response"/>
    <property type="evidence" value="ECO:0000250"/>
    <property type="project" value="UniProtKB"/>
</dbReference>
<dbReference type="GO" id="GO:0090277">
    <property type="term" value="P:positive regulation of peptide hormone secretion"/>
    <property type="evidence" value="ECO:0000250"/>
    <property type="project" value="UniProtKB"/>
</dbReference>
<dbReference type="GO" id="GO:1900738">
    <property type="term" value="P:positive regulation of phospholipase C-activating G protein-coupled receptor signaling pathway"/>
    <property type="evidence" value="ECO:0000250"/>
    <property type="project" value="UniProtKB"/>
</dbReference>
<dbReference type="GO" id="GO:1903942">
    <property type="term" value="P:positive regulation of respiratory gaseous exchange"/>
    <property type="evidence" value="ECO:0000250"/>
    <property type="project" value="UniProtKB"/>
</dbReference>
<dbReference type="InterPro" id="IPR000874">
    <property type="entry name" value="Bombesin"/>
</dbReference>
<dbReference type="PANTHER" id="PTHR16866">
    <property type="entry name" value="GASTRIN-RELEASING PEPTIDE"/>
    <property type="match status" value="1"/>
</dbReference>
<dbReference type="PANTHER" id="PTHR16866:SF2">
    <property type="entry name" value="GASTRIN-RELEASING PEPTIDE"/>
    <property type="match status" value="1"/>
</dbReference>
<dbReference type="Pfam" id="PF02044">
    <property type="entry name" value="Bombesin"/>
    <property type="match status" value="1"/>
</dbReference>
<dbReference type="PROSITE" id="PS00257">
    <property type="entry name" value="BOMBESIN"/>
    <property type="match status" value="1"/>
</dbReference>
<reference key="1">
    <citation type="submission" date="2007-07" db="EMBL/GenBank/DDBJ databases">
        <authorList>
            <consortium name="NIH - Mammalian Gene Collection (MGC) project"/>
        </authorList>
    </citation>
    <scope>NUCLEOTIDE SEQUENCE [LARGE SCALE MRNA]</scope>
    <source>
        <strain>Hereford</strain>
        <tissue>Kidney</tissue>
    </source>
</reference>
<reference key="2">
    <citation type="submission" date="2003-03" db="EMBL/GenBank/DDBJ databases">
        <title>Molecular cloning of cDNA encoding an endometrial gastrin-releasing peptide (GRP) of cow.</title>
        <authorList>
            <person name="Budipitojo T."/>
            <person name="Sasaki T."/>
            <person name="Cruzana M.B.C."/>
            <person name="Kitamura N."/>
            <person name="Yamada J."/>
        </authorList>
    </citation>
    <scope>NUCLEOTIDE SEQUENCE [MRNA] OF 9-134</scope>
    <source>
        <tissue>Endometrium</tissue>
    </source>
</reference>
<reference key="3">
    <citation type="journal article" date="1989" name="Peptides">
        <title>Structural identification, subcellular localization and secretion of bovine adrenomedullary neuromedin C [GRP-(18-27)].</title>
        <authorList>
            <person name="Lemaire S."/>
            <person name="Trifaro J.-M."/>
            <person name="Chouinard L."/>
            <person name="Cecyre D."/>
            <person name="Dessureault J."/>
            <person name="Mercier P."/>
            <person name="Dumont M."/>
        </authorList>
    </citation>
    <scope>PROTEIN SEQUENCE OF 41-50</scope>
    <scope>AMIDATION AT MET-50</scope>
    <scope>SUBCELLULAR LOCATION</scope>
    <scope>TISSUE SPECIFICITY</scope>
    <source>
        <tissue>Adrenal medulla</tissue>
    </source>
</reference>